<organism>
    <name type="scientific">Nostoc punctiforme (strain ATCC 29133 / PCC 73102)</name>
    <dbReference type="NCBI Taxonomy" id="63737"/>
    <lineage>
        <taxon>Bacteria</taxon>
        <taxon>Bacillati</taxon>
        <taxon>Cyanobacteriota</taxon>
        <taxon>Cyanophyceae</taxon>
        <taxon>Nostocales</taxon>
        <taxon>Nostocaceae</taxon>
        <taxon>Nostoc</taxon>
    </lineage>
</organism>
<accession>Q9EYH3</accession>
<accession>B2J5X4</accession>
<proteinExistence type="inferred from homology"/>
<gene>
    <name evidence="1" type="primary">hypA</name>
    <name type="ordered locus">Npun_R0358</name>
</gene>
<reference key="1">
    <citation type="submission" date="2000-12" db="EMBL/GenBank/DDBJ databases">
        <title>Organization of hyp-genes in the cyanobacterium Nostoc PCC73102.</title>
        <authorList>
            <person name="Wunschiers R."/>
            <person name="Lindblad P."/>
        </authorList>
    </citation>
    <scope>NUCLEOTIDE SEQUENCE [GENOMIC DNA]</scope>
</reference>
<reference key="2">
    <citation type="journal article" date="2013" name="Plant Physiol.">
        <title>A Nostoc punctiforme Sugar Transporter Necessary to Establish a Cyanobacterium-Plant Symbiosis.</title>
        <authorList>
            <person name="Ekman M."/>
            <person name="Picossi S."/>
            <person name="Campbell E.L."/>
            <person name="Meeks J.C."/>
            <person name="Flores E."/>
        </authorList>
    </citation>
    <scope>NUCLEOTIDE SEQUENCE [LARGE SCALE GENOMIC DNA]</scope>
    <source>
        <strain>ATCC 29133 / PCC 73102</strain>
    </source>
</reference>
<name>HYPA_NOSP7</name>
<comment type="function">
    <text evidence="1">Involved in the maturation of [NiFe] hydrogenases. Required for nickel insertion into the metal center of the hydrogenase.</text>
</comment>
<comment type="similarity">
    <text evidence="1 2">Belongs to the HypA/HybF family.</text>
</comment>
<protein>
    <recommendedName>
        <fullName evidence="1">Hydrogenase maturation factor HypA</fullName>
    </recommendedName>
</protein>
<feature type="chain" id="PRO_0000129044" description="Hydrogenase maturation factor HypA">
    <location>
        <begin position="1"/>
        <end position="113"/>
    </location>
</feature>
<feature type="binding site" evidence="1">
    <location>
        <position position="2"/>
    </location>
    <ligand>
        <name>Ni(2+)</name>
        <dbReference type="ChEBI" id="CHEBI:49786"/>
    </ligand>
</feature>
<feature type="binding site" evidence="1">
    <location>
        <position position="70"/>
    </location>
    <ligand>
        <name>Zn(2+)</name>
        <dbReference type="ChEBI" id="CHEBI:29105"/>
    </ligand>
</feature>
<feature type="binding site" evidence="1">
    <location>
        <position position="73"/>
    </location>
    <ligand>
        <name>Zn(2+)</name>
        <dbReference type="ChEBI" id="CHEBI:29105"/>
    </ligand>
</feature>
<feature type="binding site" evidence="1">
    <location>
        <position position="86"/>
    </location>
    <ligand>
        <name>Zn(2+)</name>
        <dbReference type="ChEBI" id="CHEBI:29105"/>
    </ligand>
</feature>
<feature type="binding site" evidence="1">
    <location>
        <position position="88"/>
    </location>
    <ligand>
        <name>Zn(2+)</name>
        <dbReference type="ChEBI" id="CHEBI:29105"/>
    </ligand>
</feature>
<evidence type="ECO:0000255" key="1">
    <source>
        <dbReference type="HAMAP-Rule" id="MF_00213"/>
    </source>
</evidence>
<evidence type="ECO:0000305" key="2"/>
<keyword id="KW-0479">Metal-binding</keyword>
<keyword id="KW-0533">Nickel</keyword>
<keyword id="KW-1185">Reference proteome</keyword>
<keyword id="KW-0862">Zinc</keyword>
<dbReference type="EMBL" id="AF325724">
    <property type="protein sequence ID" value="AAG49380.1"/>
    <property type="molecule type" value="Genomic_DNA"/>
</dbReference>
<dbReference type="EMBL" id="CP001037">
    <property type="protein sequence ID" value="ACC79140.1"/>
    <property type="molecule type" value="Genomic_DNA"/>
</dbReference>
<dbReference type="RefSeq" id="WP_012407166.1">
    <property type="nucleotide sequence ID" value="NC_010628.1"/>
</dbReference>
<dbReference type="SMR" id="Q9EYH3"/>
<dbReference type="STRING" id="63737.Npun_R0358"/>
<dbReference type="DNASU" id="6249826"/>
<dbReference type="EnsemblBacteria" id="ACC79140">
    <property type="protein sequence ID" value="ACC79140"/>
    <property type="gene ID" value="Npun_R0358"/>
</dbReference>
<dbReference type="KEGG" id="npu:Npun_R0358"/>
<dbReference type="eggNOG" id="COG0375">
    <property type="taxonomic scope" value="Bacteria"/>
</dbReference>
<dbReference type="HOGENOM" id="CLU_126929_3_0_3"/>
<dbReference type="OrthoDB" id="9800361at2"/>
<dbReference type="PhylomeDB" id="Q9EYH3"/>
<dbReference type="Proteomes" id="UP000001191">
    <property type="component" value="Chromosome"/>
</dbReference>
<dbReference type="GO" id="GO:0016151">
    <property type="term" value="F:nickel cation binding"/>
    <property type="evidence" value="ECO:0007669"/>
    <property type="project" value="UniProtKB-UniRule"/>
</dbReference>
<dbReference type="GO" id="GO:0008270">
    <property type="term" value="F:zinc ion binding"/>
    <property type="evidence" value="ECO:0007669"/>
    <property type="project" value="UniProtKB-UniRule"/>
</dbReference>
<dbReference type="GO" id="GO:0051604">
    <property type="term" value="P:protein maturation"/>
    <property type="evidence" value="ECO:0007669"/>
    <property type="project" value="InterPro"/>
</dbReference>
<dbReference type="GO" id="GO:0036211">
    <property type="term" value="P:protein modification process"/>
    <property type="evidence" value="ECO:0007669"/>
    <property type="project" value="UniProtKB-UniRule"/>
</dbReference>
<dbReference type="Gene3D" id="3.30.2320.80">
    <property type="match status" value="1"/>
</dbReference>
<dbReference type="HAMAP" id="MF_00213">
    <property type="entry name" value="HypA_HybF"/>
    <property type="match status" value="1"/>
</dbReference>
<dbReference type="InterPro" id="IPR020538">
    <property type="entry name" value="Hydgase_Ni_incorp_HypA/HybF_CS"/>
</dbReference>
<dbReference type="InterPro" id="IPR000688">
    <property type="entry name" value="HypA/HybF"/>
</dbReference>
<dbReference type="PANTHER" id="PTHR34535">
    <property type="entry name" value="HYDROGENASE MATURATION FACTOR HYPA"/>
    <property type="match status" value="1"/>
</dbReference>
<dbReference type="PANTHER" id="PTHR34535:SF3">
    <property type="entry name" value="HYDROGENASE MATURATION FACTOR HYPA"/>
    <property type="match status" value="1"/>
</dbReference>
<dbReference type="Pfam" id="PF01155">
    <property type="entry name" value="HypA"/>
    <property type="match status" value="1"/>
</dbReference>
<dbReference type="PIRSF" id="PIRSF004761">
    <property type="entry name" value="Hydrgn_mat_HypA"/>
    <property type="match status" value="1"/>
</dbReference>
<dbReference type="PROSITE" id="PS01249">
    <property type="entry name" value="HYPA"/>
    <property type="match status" value="1"/>
</dbReference>
<sequence length="113" mass="12363">MHEFGITQNIVAIVTEHAKGAKVQRVLLEIGKLSAIMPDAIRFCFDICTQGTVLEGATLEILEIPGLGRCRQCGGEIYLDKPFGICNCGSVQLDLITGEELKIKEIEIEELCV</sequence>